<sequence>MGYLVKLACGLLLPLATADVNLAQQPFGEFEWQPKFDTPSGDHTSCAVSRLSAYEVGEGPVSFSLSPTEHPEIPKLSTINSTVWEQWEFDAVSESGTGSVLMGFSRDPSYSFFGQGNLRVEFYMTLEDGTRIQELEYTESSTVIDCPDSIRGIWNSSDRSYAFEISRDMQRARVWWDTGREKGSIAIESTTTPHLADGEIWPPEEGESRVKKSWPSVKLSPGLYMSQPIAGGKVTAHVQIGKKTMSITGYGAHSRLWAENSWFKICRGWQIMRGFLGPYTISYWRPLSRLDDWVPYFAAHLFKHGRLVFTSQVGAPSQQVDYTQFHSDFSGNVSGSLADKATGRVLEFVSPSTGKTWRFHHRHFAKMFEMGFGGGRGLTGFLDEIVGGEVGTDEEFTGRGFSEQVLLPDEIKQWQIWVVYGIGFLGRWKNTVTNLVLSIW</sequence>
<feature type="signal peptide" evidence="1">
    <location>
        <begin position="1"/>
        <end position="18"/>
    </location>
</feature>
<feature type="chain" id="PRO_5003436058" description="Diels-Alderase mycB">
    <location>
        <begin position="19"/>
        <end position="440"/>
    </location>
</feature>
<feature type="glycosylation site" description="N-linked (GlcNAc...) asparagine" evidence="2">
    <location>
        <position position="80"/>
    </location>
</feature>
<feature type="glycosylation site" description="N-linked (GlcNAc...) asparagine" evidence="2">
    <location>
        <position position="155"/>
    </location>
</feature>
<feature type="glycosylation site" description="N-linked (GlcNAc...) asparagine" evidence="2">
    <location>
        <position position="332"/>
    </location>
</feature>
<comment type="function">
    <text evidence="3">Diels-Alderase; part of the gene cluster that mediates the biosynthesis of myceliothermophins, mycotoxins that contain a trans-fused decalin ring system connected to a conjugated 3-pyrrolin-2-one moiety and that have potential anti-tumor properties (PubMed:27960349). The polyketide synthase module (PKS) of the PKS-NRPS mycA is responsible for the synthesis of the octaketide backbone (PubMed:27960349). The downstream nonribosomal peptide synthetase (NRPS) module then amidates the carboxyl end of the octaketide with a leucine (PubMed:27960349). A reductase-like domain (R) at the C-terminus catalyzes the reductive release of the polyketide-amino acid intermediate (PubMed:27960349). Because mycA lacks a designated enoylreductase (ER) domain, the required activity is provided the enoyl reductase mycC (PubMed:27960349). Following mycA-catalyzed construction and release of aminoacyl polyketide aldehyde, Knoevenagel condensation yields the expected ketone (PubMed:27960349). This C18 keto acyclic precursor is the substrate of the Diels-Alderase mycB, that catalyzes the Diels-Alder cycloaddition to produce myceliothermophin E (PubMed:27960349). A yet unknown oxygenase involved in the production of myceliothermophin A, via substitution with a hydroxyl group at the C21, has still to be identified (PubMed:27960349).</text>
</comment>
<comment type="catalytic activity">
    <reaction evidence="3">
        <text>(5S)-5-(2-methylpropyl)-3-[(2E,6R,8E,10E,12E)-6,8,10,12-tetramethyltetradeca-2,8,10,12-tetraenoyl]-2,5-dihydro-1H-pyrrol-2-one = (5S)-3-[(1S,2R,4aR,6R,8aS)-2-(but-2-en-2-yl)-3,4a,6-trimethyl-1,2,4a,5,6,7,8,8a-octahydronaphthalene-1-carbonyl]-5-(2-methylpropyl)-2,5-dihydro-1H-pyrrol-2-one</text>
        <dbReference type="Rhea" id="RHEA:67308"/>
        <dbReference type="ChEBI" id="CHEBI:169930"/>
        <dbReference type="ChEBI" id="CHEBI:169934"/>
    </reaction>
    <physiologicalReaction direction="left-to-right" evidence="3">
        <dbReference type="Rhea" id="RHEA:67309"/>
    </physiologicalReaction>
</comment>
<comment type="catalytic activity">
    <reaction evidence="3">
        <text>(5Z)-5-(2-methylpropylidene)-3-[(2E,6R,8E,10E,12E)-6,8,10,12-tetramethyltetradeca-2,8,10,12-tetraenoyl]-2,5-dihydro-1H-pyrrol-2-one = myceliothermophin E</text>
        <dbReference type="Rhea" id="RHEA:67312"/>
        <dbReference type="ChEBI" id="CHEBI:167709"/>
        <dbReference type="ChEBI" id="CHEBI:169932"/>
    </reaction>
    <physiologicalReaction direction="left-to-right" evidence="3">
        <dbReference type="Rhea" id="RHEA:67313"/>
    </physiologicalReaction>
</comment>
<comment type="biophysicochemical properties">
    <kinetics>
        <KM evidence="3">75 uM for the C18 keto acyclic precursor</KM>
    </kinetics>
</comment>
<comment type="pathway">
    <text evidence="3">Mycotoxin biosynthesis.</text>
</comment>
<comment type="disruption phenotype">
    <text evidence="3">Completely abolishes the production of myceliothermophin E, but leads to the accumulation of its C18 keto acyclic precursor.</text>
</comment>
<comment type="similarity">
    <text evidence="5">Belongs to the Diels-Alderase family.</text>
</comment>
<name>MYCB_THET4</name>
<reference key="1">
    <citation type="journal article" date="2011" name="Nat. Biotechnol.">
        <title>Comparative genomic analysis of the thermophilic biomass-degrading fungi Myceliophthora thermophila and Thielavia terrestris.</title>
        <authorList>
            <person name="Berka R.M."/>
            <person name="Grigoriev I.V."/>
            <person name="Otillar R."/>
            <person name="Salamov A."/>
            <person name="Grimwood J."/>
            <person name="Reid I."/>
            <person name="Ishmael N."/>
            <person name="John T."/>
            <person name="Darmond C."/>
            <person name="Moisan M.-C."/>
            <person name="Henrissat B."/>
            <person name="Coutinho P.M."/>
            <person name="Lombard V."/>
            <person name="Natvig D.O."/>
            <person name="Lindquist E."/>
            <person name="Schmutz J."/>
            <person name="Lucas S."/>
            <person name="Harris P."/>
            <person name="Powlowski J."/>
            <person name="Bellemare A."/>
            <person name="Taylor D."/>
            <person name="Butler G."/>
            <person name="de Vries R.P."/>
            <person name="Allijn I.E."/>
            <person name="van den Brink J."/>
            <person name="Ushinsky S."/>
            <person name="Storms R."/>
            <person name="Powell A.J."/>
            <person name="Paulsen I.T."/>
            <person name="Elbourne L.D.H."/>
            <person name="Baker S.E."/>
            <person name="Magnuson J."/>
            <person name="LaBoissiere S."/>
            <person name="Clutterbuck A.J."/>
            <person name="Martinez D."/>
            <person name="Wogulis M."/>
            <person name="de Leon A.L."/>
            <person name="Rey M.W."/>
            <person name="Tsang A."/>
        </authorList>
    </citation>
    <scope>NUCLEOTIDE SEQUENCE [LARGE SCALE GENOMIC DNA]</scope>
    <source>
        <strain>ATCC 42464 / BCRC 31852 / DSM 1799</strain>
    </source>
</reference>
<reference key="2">
    <citation type="journal article" date="2016" name="J. Am. Chem. Soc.">
        <title>Biochemical characterization of a eukaryotic decalin-forming Diels-Alderase.</title>
        <authorList>
            <person name="Li L."/>
            <person name="Yu P."/>
            <person name="Tang M.C."/>
            <person name="Zou Y."/>
            <person name="Gao S.S."/>
            <person name="Hung Y.S."/>
            <person name="Zhao M."/>
            <person name="Watanabe K."/>
            <person name="Houk K.N."/>
            <person name="Tang Y."/>
        </authorList>
    </citation>
    <scope>FUNCTION</scope>
    <scope>DISRUPTION PHENOTYPE</scope>
    <scope>CATALYTIC ACTIVITY</scope>
    <scope>BIOPHYSICOCHEMICAL PROPERTIES</scope>
    <scope>PATHWAY</scope>
</reference>
<accession>G2Q9A6</accession>
<protein>
    <recommendedName>
        <fullName evidence="4">Diels-Alderase mycB</fullName>
        <ecNumber evidence="3">5.5.1.-</ecNumber>
    </recommendedName>
    <alternativeName>
        <fullName evidence="4">Myceliothermophin biosynthesis cluster protein B</fullName>
    </alternativeName>
</protein>
<gene>
    <name evidence="4" type="primary">mycB</name>
    <name type="ORF">MYCTH_114667</name>
</gene>
<organism>
    <name type="scientific">Thermothelomyces thermophilus (strain ATCC 42464 / BCRC 31852 / DSM 1799)</name>
    <name type="common">Sporotrichum thermophile</name>
    <dbReference type="NCBI Taxonomy" id="573729"/>
    <lineage>
        <taxon>Eukaryota</taxon>
        <taxon>Fungi</taxon>
        <taxon>Dikarya</taxon>
        <taxon>Ascomycota</taxon>
        <taxon>Pezizomycotina</taxon>
        <taxon>Sordariomycetes</taxon>
        <taxon>Sordariomycetidae</taxon>
        <taxon>Sordariales</taxon>
        <taxon>Chaetomiaceae</taxon>
        <taxon>Thermothelomyces</taxon>
    </lineage>
</organism>
<proteinExistence type="evidence at protein level"/>
<evidence type="ECO:0000255" key="1"/>
<evidence type="ECO:0000255" key="2">
    <source>
        <dbReference type="PROSITE-ProRule" id="PRU00498"/>
    </source>
</evidence>
<evidence type="ECO:0000269" key="3">
    <source>
    </source>
</evidence>
<evidence type="ECO:0000303" key="4">
    <source>
    </source>
</evidence>
<evidence type="ECO:0000305" key="5"/>
<dbReference type="EC" id="5.5.1.-" evidence="3"/>
<dbReference type="EMBL" id="CP003003">
    <property type="protein sequence ID" value="AEO57198.1"/>
    <property type="molecule type" value="Genomic_DNA"/>
</dbReference>
<dbReference type="RefSeq" id="XP_003662443.1">
    <property type="nucleotide sequence ID" value="XM_003662395.1"/>
</dbReference>
<dbReference type="SMR" id="G2Q9A6"/>
<dbReference type="GlyCosmos" id="G2Q9A6">
    <property type="glycosylation" value="3 sites, No reported glycans"/>
</dbReference>
<dbReference type="GeneID" id="11512496"/>
<dbReference type="KEGG" id="mtm:MYCTH_114667"/>
<dbReference type="VEuPathDB" id="FungiDB:MYCTH_114667"/>
<dbReference type="eggNOG" id="ENOG502SK1F">
    <property type="taxonomic scope" value="Eukaryota"/>
</dbReference>
<dbReference type="HOGENOM" id="CLU_041924_1_0_1"/>
<dbReference type="InParanoid" id="G2Q9A6"/>
<dbReference type="OMA" id="GGHERFW"/>
<dbReference type="OrthoDB" id="5344254at2759"/>
<dbReference type="Proteomes" id="UP000007322">
    <property type="component" value="Chromosome 2"/>
</dbReference>
<dbReference type="GO" id="GO:0016853">
    <property type="term" value="F:isomerase activity"/>
    <property type="evidence" value="ECO:0007669"/>
    <property type="project" value="UniProtKB-KW"/>
</dbReference>
<dbReference type="InterPro" id="IPR054499">
    <property type="entry name" value="DA_C"/>
</dbReference>
<dbReference type="Pfam" id="PF22903">
    <property type="entry name" value="DA_C"/>
    <property type="match status" value="1"/>
</dbReference>
<dbReference type="Pfam" id="PF24137">
    <property type="entry name" value="DA_N"/>
    <property type="match status" value="1"/>
</dbReference>
<keyword id="KW-0325">Glycoprotein</keyword>
<keyword id="KW-0413">Isomerase</keyword>
<keyword id="KW-1185">Reference proteome</keyword>
<keyword id="KW-0732">Signal</keyword>